<feature type="chain" id="PRO_1000137108" description="Ornithine carbamoyltransferase">
    <location>
        <begin position="1"/>
        <end position="337"/>
    </location>
</feature>
<feature type="binding site" evidence="2">
    <location>
        <begin position="57"/>
        <end position="60"/>
    </location>
    <ligand>
        <name>carbamoyl phosphate</name>
        <dbReference type="ChEBI" id="CHEBI:58228"/>
    </ligand>
</feature>
<feature type="binding site" evidence="2">
    <location>
        <position position="84"/>
    </location>
    <ligand>
        <name>carbamoyl phosphate</name>
        <dbReference type="ChEBI" id="CHEBI:58228"/>
    </ligand>
</feature>
<feature type="binding site" evidence="2">
    <location>
        <position position="108"/>
    </location>
    <ligand>
        <name>carbamoyl phosphate</name>
        <dbReference type="ChEBI" id="CHEBI:58228"/>
    </ligand>
</feature>
<feature type="binding site" evidence="2">
    <location>
        <begin position="135"/>
        <end position="138"/>
    </location>
    <ligand>
        <name>carbamoyl phosphate</name>
        <dbReference type="ChEBI" id="CHEBI:58228"/>
    </ligand>
</feature>
<feature type="binding site" evidence="2">
    <location>
        <position position="167"/>
    </location>
    <ligand>
        <name>L-ornithine</name>
        <dbReference type="ChEBI" id="CHEBI:46911"/>
    </ligand>
</feature>
<feature type="binding site" evidence="2">
    <location>
        <position position="231"/>
    </location>
    <ligand>
        <name>L-ornithine</name>
        <dbReference type="ChEBI" id="CHEBI:46911"/>
    </ligand>
</feature>
<feature type="binding site" evidence="2">
    <location>
        <begin position="235"/>
        <end position="236"/>
    </location>
    <ligand>
        <name>L-ornithine</name>
        <dbReference type="ChEBI" id="CHEBI:46911"/>
    </ligand>
</feature>
<feature type="binding site" evidence="2">
    <location>
        <begin position="272"/>
        <end position="273"/>
    </location>
    <ligand>
        <name>carbamoyl phosphate</name>
        <dbReference type="ChEBI" id="CHEBI:58228"/>
    </ligand>
</feature>
<feature type="binding site" evidence="2">
    <location>
        <position position="317"/>
    </location>
    <ligand>
        <name>carbamoyl phosphate</name>
        <dbReference type="ChEBI" id="CHEBI:58228"/>
    </ligand>
</feature>
<protein>
    <recommendedName>
        <fullName evidence="2">Ornithine carbamoyltransferase</fullName>
        <shortName evidence="2">OTCase</shortName>
        <ecNumber evidence="2">2.1.3.3</ecNumber>
    </recommendedName>
</protein>
<gene>
    <name evidence="2" type="primary">arcB</name>
    <name type="ordered locus">Spy49_1195c</name>
</gene>
<evidence type="ECO:0000250" key="1"/>
<evidence type="ECO:0000255" key="2">
    <source>
        <dbReference type="HAMAP-Rule" id="MF_01109"/>
    </source>
</evidence>
<sequence>MTQVFQGRSFLAEKDFTRAELEYLIDFSAHLKDLKKRGVPHHYLEGKNIALLFEKTSTRTRAAFTTAAIDLGAHPEYLGANDIQLGKKESTEDTAKVLGRMFDGIEFRGFSQRMVEELAEFSGVPVWNGLTDEWHPTQMLADYLTVKENFGKLEGLTLVYCGDGRNNVANSLLVTGAILGVNVHIFSPKELFPEEEIVTLAEGYAKESGARILITEDADEAVKGADVLYTDVWVSMGEEDKFKERVELLQPYQVNMDLVQKAGNDKLIFLHCLPAFHDTNTVYGKDVAEKFGVKEMEVTDEVFRSKYARHFDQAENRMHTIKAVMAATLGNLFIPKV</sequence>
<comment type="function">
    <text evidence="1">Reversibly catalyzes the transfer of the carbamoyl group from carbamoyl phosphate (CP) to the N(epsilon) atom of ornithine (ORN) to produce L-citrulline.</text>
</comment>
<comment type="catalytic activity">
    <reaction evidence="2">
        <text>carbamoyl phosphate + L-ornithine = L-citrulline + phosphate + H(+)</text>
        <dbReference type="Rhea" id="RHEA:19513"/>
        <dbReference type="ChEBI" id="CHEBI:15378"/>
        <dbReference type="ChEBI" id="CHEBI:43474"/>
        <dbReference type="ChEBI" id="CHEBI:46911"/>
        <dbReference type="ChEBI" id="CHEBI:57743"/>
        <dbReference type="ChEBI" id="CHEBI:58228"/>
        <dbReference type="EC" id="2.1.3.3"/>
    </reaction>
</comment>
<comment type="pathway">
    <text evidence="2">Amino-acid degradation; L-arginine degradation via ADI pathway; carbamoyl phosphate from L-arginine: step 2/2.</text>
</comment>
<comment type="subcellular location">
    <subcellularLocation>
        <location evidence="2">Cytoplasm</location>
    </subcellularLocation>
</comment>
<comment type="similarity">
    <text evidence="2">Belongs to the aspartate/ornithine carbamoyltransferase superfamily. OTCase family.</text>
</comment>
<keyword id="KW-0056">Arginine metabolism</keyword>
<keyword id="KW-0963">Cytoplasm</keyword>
<keyword id="KW-0808">Transferase</keyword>
<accession>B5XMC1</accession>
<reference key="1">
    <citation type="journal article" date="2008" name="J. Bacteriol.">
        <title>Genome sequence of a nephritogenic and highly transformable M49 strain of Streptococcus pyogenes.</title>
        <authorList>
            <person name="McShan W.M."/>
            <person name="Ferretti J.J."/>
            <person name="Karasawa T."/>
            <person name="Suvorov A.N."/>
            <person name="Lin S."/>
            <person name="Qin B."/>
            <person name="Jia H."/>
            <person name="Kenton S."/>
            <person name="Najar F."/>
            <person name="Wu H."/>
            <person name="Scott J."/>
            <person name="Roe B.A."/>
            <person name="Savic D.J."/>
        </authorList>
    </citation>
    <scope>NUCLEOTIDE SEQUENCE [LARGE SCALE GENOMIC DNA]</scope>
    <source>
        <strain>NZ131</strain>
    </source>
</reference>
<organism>
    <name type="scientific">Streptococcus pyogenes serotype M49 (strain NZ131)</name>
    <dbReference type="NCBI Taxonomy" id="471876"/>
    <lineage>
        <taxon>Bacteria</taxon>
        <taxon>Bacillati</taxon>
        <taxon>Bacillota</taxon>
        <taxon>Bacilli</taxon>
        <taxon>Lactobacillales</taxon>
        <taxon>Streptococcaceae</taxon>
        <taxon>Streptococcus</taxon>
    </lineage>
</organism>
<dbReference type="EC" id="2.1.3.3" evidence="2"/>
<dbReference type="EMBL" id="CP000829">
    <property type="protein sequence ID" value="ACI61483.1"/>
    <property type="molecule type" value="Genomic_DNA"/>
</dbReference>
<dbReference type="SMR" id="B5XMC1"/>
<dbReference type="KEGG" id="soz:Spy49_1195c"/>
<dbReference type="HOGENOM" id="CLU_043846_3_1_9"/>
<dbReference type="UniPathway" id="UPA00254">
    <property type="reaction ID" value="UER00365"/>
</dbReference>
<dbReference type="Proteomes" id="UP000001039">
    <property type="component" value="Chromosome"/>
</dbReference>
<dbReference type="GO" id="GO:0005737">
    <property type="term" value="C:cytoplasm"/>
    <property type="evidence" value="ECO:0007669"/>
    <property type="project" value="UniProtKB-SubCell"/>
</dbReference>
<dbReference type="GO" id="GO:0016597">
    <property type="term" value="F:amino acid binding"/>
    <property type="evidence" value="ECO:0007669"/>
    <property type="project" value="InterPro"/>
</dbReference>
<dbReference type="GO" id="GO:0004585">
    <property type="term" value="F:ornithine carbamoyltransferase activity"/>
    <property type="evidence" value="ECO:0007669"/>
    <property type="project" value="UniProtKB-UniRule"/>
</dbReference>
<dbReference type="GO" id="GO:0042450">
    <property type="term" value="P:arginine biosynthetic process via ornithine"/>
    <property type="evidence" value="ECO:0007669"/>
    <property type="project" value="TreeGrafter"/>
</dbReference>
<dbReference type="GO" id="GO:0019547">
    <property type="term" value="P:arginine catabolic process to ornithine"/>
    <property type="evidence" value="ECO:0007669"/>
    <property type="project" value="UniProtKB-UniRule"/>
</dbReference>
<dbReference type="GO" id="GO:0019240">
    <property type="term" value="P:citrulline biosynthetic process"/>
    <property type="evidence" value="ECO:0007669"/>
    <property type="project" value="TreeGrafter"/>
</dbReference>
<dbReference type="FunFam" id="3.40.50.1370:FF:000004">
    <property type="entry name" value="Ornithine carbamoyltransferase"/>
    <property type="match status" value="1"/>
</dbReference>
<dbReference type="Gene3D" id="3.40.50.1370">
    <property type="entry name" value="Aspartate/ornithine carbamoyltransferase"/>
    <property type="match status" value="2"/>
</dbReference>
<dbReference type="HAMAP" id="MF_01109">
    <property type="entry name" value="OTCase"/>
    <property type="match status" value="1"/>
</dbReference>
<dbReference type="InterPro" id="IPR006132">
    <property type="entry name" value="Asp/Orn_carbamoyltranf_P-bd"/>
</dbReference>
<dbReference type="InterPro" id="IPR006130">
    <property type="entry name" value="Asp/Orn_carbamoylTrfase"/>
</dbReference>
<dbReference type="InterPro" id="IPR036901">
    <property type="entry name" value="Asp/Orn_carbamoylTrfase_sf"/>
</dbReference>
<dbReference type="InterPro" id="IPR006131">
    <property type="entry name" value="Asp_carbamoyltransf_Asp/Orn-bd"/>
</dbReference>
<dbReference type="InterPro" id="IPR002292">
    <property type="entry name" value="Orn/put_carbamltrans"/>
</dbReference>
<dbReference type="InterPro" id="IPR024904">
    <property type="entry name" value="OTCase_ArgI"/>
</dbReference>
<dbReference type="NCBIfam" id="TIGR00658">
    <property type="entry name" value="orni_carb_tr"/>
    <property type="match status" value="1"/>
</dbReference>
<dbReference type="NCBIfam" id="NF001986">
    <property type="entry name" value="PRK00779.1"/>
    <property type="match status" value="1"/>
</dbReference>
<dbReference type="PANTHER" id="PTHR45753:SF1">
    <property type="entry name" value="ORNITHINE CARBAMOYLTRANSFERASE, CATABOLIC"/>
    <property type="match status" value="1"/>
</dbReference>
<dbReference type="PANTHER" id="PTHR45753">
    <property type="entry name" value="ORNITHINE CARBAMOYLTRANSFERASE, MITOCHONDRIAL"/>
    <property type="match status" value="1"/>
</dbReference>
<dbReference type="Pfam" id="PF00185">
    <property type="entry name" value="OTCace"/>
    <property type="match status" value="1"/>
</dbReference>
<dbReference type="Pfam" id="PF02729">
    <property type="entry name" value="OTCace_N"/>
    <property type="match status" value="1"/>
</dbReference>
<dbReference type="PRINTS" id="PR00100">
    <property type="entry name" value="AOTCASE"/>
</dbReference>
<dbReference type="PRINTS" id="PR00102">
    <property type="entry name" value="OTCASE"/>
</dbReference>
<dbReference type="SUPFAM" id="SSF53671">
    <property type="entry name" value="Aspartate/ornithine carbamoyltransferase"/>
    <property type="match status" value="1"/>
</dbReference>
<dbReference type="PROSITE" id="PS00097">
    <property type="entry name" value="CARBAMOYLTRANSFERASE"/>
    <property type="match status" value="1"/>
</dbReference>
<proteinExistence type="inferred from homology"/>
<name>OTC_STRPZ</name>